<dbReference type="EC" id="4.1.1.20"/>
<dbReference type="EMBL" id="AL163812">
    <property type="protein sequence ID" value="CAB87661.1"/>
    <property type="status" value="ALT_SEQ"/>
    <property type="molecule type" value="Genomic_DNA"/>
</dbReference>
<dbReference type="EMBL" id="CP002688">
    <property type="protein sequence ID" value="AED91734.1"/>
    <property type="molecule type" value="Genomic_DNA"/>
</dbReference>
<dbReference type="EMBL" id="AY049266">
    <property type="protein sequence ID" value="AAK83608.1"/>
    <property type="molecule type" value="mRNA"/>
</dbReference>
<dbReference type="EMBL" id="AY142042">
    <property type="protein sequence ID" value="AAM98306.1"/>
    <property type="molecule type" value="mRNA"/>
</dbReference>
<dbReference type="EMBL" id="AJ249960">
    <property type="protein sequence ID" value="CAB62550.1"/>
    <property type="molecule type" value="mRNA"/>
</dbReference>
<dbReference type="PIR" id="T48547">
    <property type="entry name" value="T48547"/>
</dbReference>
<dbReference type="RefSeq" id="NP_568252.1">
    <property type="nucleotide sequence ID" value="NM_121226.5"/>
</dbReference>
<dbReference type="PDB" id="6N2F">
    <property type="method" value="X-ray"/>
    <property type="resolution" value="2.27 A"/>
    <property type="chains" value="A/B=68-489"/>
</dbReference>
<dbReference type="PDBsum" id="6N2F"/>
<dbReference type="SMR" id="Q94A94"/>
<dbReference type="BioGRID" id="16339">
    <property type="interactions" value="6"/>
</dbReference>
<dbReference type="FunCoup" id="Q94A94">
    <property type="interactions" value="1538"/>
</dbReference>
<dbReference type="STRING" id="3702.Q94A94"/>
<dbReference type="GlyGen" id="Q94A94">
    <property type="glycosylation" value="2 sites"/>
</dbReference>
<dbReference type="iPTMnet" id="Q94A94"/>
<dbReference type="PaxDb" id="3702-AT5G11880.1"/>
<dbReference type="ProteomicsDB" id="224560"/>
<dbReference type="EnsemblPlants" id="AT5G11880.1">
    <property type="protein sequence ID" value="AT5G11880.1"/>
    <property type="gene ID" value="AT5G11880"/>
</dbReference>
<dbReference type="GeneID" id="831061"/>
<dbReference type="Gramene" id="AT5G11880.1">
    <property type="protein sequence ID" value="AT5G11880.1"/>
    <property type="gene ID" value="AT5G11880"/>
</dbReference>
<dbReference type="KEGG" id="ath:AT5G11880"/>
<dbReference type="Araport" id="AT5G11880"/>
<dbReference type="TAIR" id="AT5G11880">
    <property type="gene designation" value="DAPDC2"/>
</dbReference>
<dbReference type="eggNOG" id="KOG0622">
    <property type="taxonomic scope" value="Eukaryota"/>
</dbReference>
<dbReference type="HOGENOM" id="CLU_026444_0_0_1"/>
<dbReference type="InParanoid" id="Q94A94"/>
<dbReference type="OMA" id="AYCRSMA"/>
<dbReference type="PhylomeDB" id="Q94A94"/>
<dbReference type="BioCyc" id="ARA:AT5G11880-MONOMER"/>
<dbReference type="BioCyc" id="MetaCyc:AT5G11880-MONOMER"/>
<dbReference type="BRENDA" id="4.1.1.20">
    <property type="organism ID" value="399"/>
</dbReference>
<dbReference type="UniPathway" id="UPA00034">
    <property type="reaction ID" value="UER00027"/>
</dbReference>
<dbReference type="CD-CODE" id="4299E36E">
    <property type="entry name" value="Nucleolus"/>
</dbReference>
<dbReference type="PRO" id="PR:Q94A94"/>
<dbReference type="Proteomes" id="UP000006548">
    <property type="component" value="Chromosome 5"/>
</dbReference>
<dbReference type="ExpressionAtlas" id="Q94A94">
    <property type="expression patterns" value="baseline and differential"/>
</dbReference>
<dbReference type="GO" id="GO:0009507">
    <property type="term" value="C:chloroplast"/>
    <property type="evidence" value="ECO:0007005"/>
    <property type="project" value="TAIR"/>
</dbReference>
<dbReference type="GO" id="GO:0009570">
    <property type="term" value="C:chloroplast stroma"/>
    <property type="evidence" value="ECO:0007005"/>
    <property type="project" value="TAIR"/>
</dbReference>
<dbReference type="GO" id="GO:0005886">
    <property type="term" value="C:plasma membrane"/>
    <property type="evidence" value="ECO:0007005"/>
    <property type="project" value="TAIR"/>
</dbReference>
<dbReference type="GO" id="GO:0008836">
    <property type="term" value="F:diaminopimelate decarboxylase activity"/>
    <property type="evidence" value="ECO:0007669"/>
    <property type="project" value="UniProtKB-EC"/>
</dbReference>
<dbReference type="GO" id="GO:0009089">
    <property type="term" value="P:lysine biosynthetic process via diaminopimelate"/>
    <property type="evidence" value="ECO:0007669"/>
    <property type="project" value="UniProtKB-UniPathway"/>
</dbReference>
<dbReference type="CDD" id="cd06828">
    <property type="entry name" value="PLPDE_III_DapDC"/>
    <property type="match status" value="1"/>
</dbReference>
<dbReference type="FunFam" id="2.40.37.10:FF:000003">
    <property type="entry name" value="Diaminopimelate decarboxylase"/>
    <property type="match status" value="1"/>
</dbReference>
<dbReference type="FunFam" id="3.20.20.10:FF:000003">
    <property type="entry name" value="Diaminopimelate decarboxylase"/>
    <property type="match status" value="1"/>
</dbReference>
<dbReference type="Gene3D" id="3.20.20.10">
    <property type="entry name" value="Alanine racemase"/>
    <property type="match status" value="1"/>
</dbReference>
<dbReference type="Gene3D" id="2.40.37.10">
    <property type="entry name" value="Lyase, Ornithine Decarboxylase, Chain A, domain 1"/>
    <property type="match status" value="1"/>
</dbReference>
<dbReference type="HAMAP" id="MF_02120">
    <property type="entry name" value="LysA"/>
    <property type="match status" value="1"/>
</dbReference>
<dbReference type="InterPro" id="IPR009006">
    <property type="entry name" value="Ala_racemase/Decarboxylase_C"/>
</dbReference>
<dbReference type="InterPro" id="IPR002986">
    <property type="entry name" value="DAP_deCOOHase_LysA"/>
</dbReference>
<dbReference type="InterPro" id="IPR022643">
    <property type="entry name" value="De-COase2_C"/>
</dbReference>
<dbReference type="InterPro" id="IPR022657">
    <property type="entry name" value="De-COase2_CS"/>
</dbReference>
<dbReference type="InterPro" id="IPR022644">
    <property type="entry name" value="De-COase2_N"/>
</dbReference>
<dbReference type="InterPro" id="IPR022653">
    <property type="entry name" value="De-COase2_pyr-phos_BS"/>
</dbReference>
<dbReference type="InterPro" id="IPR000183">
    <property type="entry name" value="Orn/DAP/Arg_de-COase"/>
</dbReference>
<dbReference type="InterPro" id="IPR029066">
    <property type="entry name" value="PLP-binding_barrel"/>
</dbReference>
<dbReference type="NCBIfam" id="TIGR01048">
    <property type="entry name" value="lysA"/>
    <property type="match status" value="1"/>
</dbReference>
<dbReference type="PANTHER" id="PTHR43727">
    <property type="entry name" value="DIAMINOPIMELATE DECARBOXYLASE"/>
    <property type="match status" value="1"/>
</dbReference>
<dbReference type="PANTHER" id="PTHR43727:SF2">
    <property type="entry name" value="GROUP IV DECARBOXYLASE"/>
    <property type="match status" value="1"/>
</dbReference>
<dbReference type="Pfam" id="PF02784">
    <property type="entry name" value="Orn_Arg_deC_N"/>
    <property type="match status" value="1"/>
</dbReference>
<dbReference type="Pfam" id="PF00278">
    <property type="entry name" value="Orn_DAP_Arg_deC"/>
    <property type="match status" value="1"/>
</dbReference>
<dbReference type="PRINTS" id="PR01181">
    <property type="entry name" value="DAPDCRBXLASE"/>
</dbReference>
<dbReference type="PRINTS" id="PR01179">
    <property type="entry name" value="ODADCRBXLASE"/>
</dbReference>
<dbReference type="SUPFAM" id="SSF50621">
    <property type="entry name" value="Alanine racemase C-terminal domain-like"/>
    <property type="match status" value="1"/>
</dbReference>
<dbReference type="SUPFAM" id="SSF51419">
    <property type="entry name" value="PLP-binding barrel"/>
    <property type="match status" value="1"/>
</dbReference>
<dbReference type="PROSITE" id="PS00878">
    <property type="entry name" value="ODR_DC_2_1"/>
    <property type="match status" value="1"/>
</dbReference>
<dbReference type="PROSITE" id="PS00879">
    <property type="entry name" value="ODR_DC_2_2"/>
    <property type="match status" value="1"/>
</dbReference>
<accession>Q94A94</accession>
<accession>Q9LYI5</accession>
<accession>Q9SCX0</accession>
<protein>
    <recommendedName>
        <fullName>Diaminopimelate decarboxylase 2, chloroplastic</fullName>
        <shortName>DAP decarboxylase 2</shortName>
        <shortName>DAPDC 2</shortName>
        <ecNumber>4.1.1.20</ecNumber>
    </recommendedName>
</protein>
<comment type="function">
    <text evidence="3">Specifically catalyzes the decarboxylation of meso-diaminopimelate (meso-DAP) to L-lysine.</text>
</comment>
<comment type="catalytic activity">
    <reaction>
        <text>meso-2,6-diaminopimelate + H(+) = L-lysine + CO2</text>
        <dbReference type="Rhea" id="RHEA:15101"/>
        <dbReference type="ChEBI" id="CHEBI:15378"/>
        <dbReference type="ChEBI" id="CHEBI:16526"/>
        <dbReference type="ChEBI" id="CHEBI:32551"/>
        <dbReference type="ChEBI" id="CHEBI:57791"/>
        <dbReference type="EC" id="4.1.1.20"/>
    </reaction>
</comment>
<comment type="cofactor">
    <cofactor evidence="1">
        <name>pyridoxal 5'-phosphate</name>
        <dbReference type="ChEBI" id="CHEBI:597326"/>
    </cofactor>
</comment>
<comment type="pathway">
    <text>Amino-acid biosynthesis; L-lysine biosynthesis via DAP pathway; L-lysine from DL-2,6-diaminopimelate: step 1/1.</text>
</comment>
<comment type="subunit">
    <text evidence="1">Homodimer.</text>
</comment>
<comment type="subcellular location">
    <subcellularLocation>
        <location evidence="4">Plastid</location>
        <location evidence="4">Chloroplast</location>
    </subcellularLocation>
</comment>
<comment type="similarity">
    <text evidence="4">Belongs to the Orn/Lys/Arg decarboxylase class-II family. LysA subfamily.</text>
</comment>
<comment type="sequence caution" evidence="4">
    <conflict type="erroneous gene model prediction">
        <sequence resource="EMBL-CDS" id="CAB87661"/>
    </conflict>
</comment>
<feature type="transit peptide" description="Chloroplast" evidence="5">
    <location>
        <begin position="1"/>
        <end position="50"/>
    </location>
</feature>
<feature type="chain" id="PRO_0000307177" description="Diaminopimelate decarboxylase 2, chloroplastic">
    <location>
        <begin position="51"/>
        <end position="489"/>
    </location>
</feature>
<feature type="active site" description="Proton donor" evidence="2">
    <location>
        <position position="416"/>
    </location>
</feature>
<feature type="binding site" evidence="1">
    <location>
        <position position="309"/>
    </location>
    <ligand>
        <name>pyridoxal 5'-phosphate</name>
        <dbReference type="ChEBI" id="CHEBI:597326"/>
    </ligand>
</feature>
<feature type="binding site" evidence="1">
    <location>
        <begin position="345"/>
        <end position="348"/>
    </location>
    <ligand>
        <name>pyridoxal 5'-phosphate</name>
        <dbReference type="ChEBI" id="CHEBI:597326"/>
    </ligand>
</feature>
<feature type="binding site" evidence="1">
    <location>
        <position position="348"/>
    </location>
    <ligand>
        <name>substrate</name>
    </ligand>
</feature>
<feature type="binding site" evidence="1">
    <location>
        <position position="384"/>
    </location>
    <ligand>
        <name>substrate</name>
    </ligand>
</feature>
<feature type="binding site" evidence="1">
    <location>
        <position position="388"/>
    </location>
    <ligand>
        <name>substrate</name>
    </ligand>
</feature>
<feature type="binding site" evidence="1">
    <location>
        <position position="417"/>
    </location>
    <ligand>
        <name>substrate</name>
    </ligand>
</feature>
<feature type="binding site" evidence="1">
    <location>
        <position position="445"/>
    </location>
    <ligand>
        <name>pyridoxal 5'-phosphate</name>
        <dbReference type="ChEBI" id="CHEBI:597326"/>
    </ligand>
</feature>
<feature type="binding site" evidence="1">
    <location>
        <position position="445"/>
    </location>
    <ligand>
        <name>substrate</name>
    </ligand>
</feature>
<feature type="modified residue" description="N-acetylalanine" evidence="5">
    <location>
        <position position="51"/>
    </location>
</feature>
<feature type="modified residue" description="N6-(pyridoxal phosphate)lysine" evidence="1">
    <location>
        <position position="130"/>
    </location>
</feature>
<feature type="sequence conflict" description="In Ref. 4; CAB62550." evidence="4" ref="4">
    <original>P</original>
    <variation>L</variation>
    <location>
        <position position="346"/>
    </location>
</feature>
<feature type="strand" evidence="6">
    <location>
        <begin position="71"/>
        <end position="74"/>
    </location>
</feature>
<feature type="strand" evidence="6">
    <location>
        <begin position="80"/>
        <end position="82"/>
    </location>
</feature>
<feature type="helix" evidence="6">
    <location>
        <begin position="87"/>
        <end position="93"/>
    </location>
</feature>
<feature type="strand" evidence="6">
    <location>
        <begin position="99"/>
        <end position="103"/>
    </location>
</feature>
<feature type="helix" evidence="6">
    <location>
        <begin position="104"/>
        <end position="117"/>
    </location>
</feature>
<feature type="turn" evidence="6">
    <location>
        <begin position="118"/>
        <end position="120"/>
    </location>
</feature>
<feature type="strand" evidence="6">
    <location>
        <begin position="123"/>
        <end position="128"/>
    </location>
</feature>
<feature type="turn" evidence="6">
    <location>
        <begin position="129"/>
        <end position="131"/>
    </location>
</feature>
<feature type="helix" evidence="6">
    <location>
        <begin position="135"/>
        <end position="143"/>
    </location>
</feature>
<feature type="strand" evidence="6">
    <location>
        <begin position="147"/>
        <end position="152"/>
    </location>
</feature>
<feature type="helix" evidence="6">
    <location>
        <begin position="153"/>
        <end position="161"/>
    </location>
</feature>
<feature type="helix" evidence="6">
    <location>
        <begin position="166"/>
        <end position="168"/>
    </location>
</feature>
<feature type="strand" evidence="6">
    <location>
        <begin position="169"/>
        <end position="171"/>
    </location>
</feature>
<feature type="helix" evidence="6">
    <location>
        <begin position="178"/>
        <end position="187"/>
    </location>
</feature>
<feature type="strand" evidence="6">
    <location>
        <begin position="190"/>
        <end position="193"/>
    </location>
</feature>
<feature type="helix" evidence="6">
    <location>
        <begin position="196"/>
        <end position="209"/>
    </location>
</feature>
<feature type="strand" evidence="6">
    <location>
        <begin position="213"/>
        <end position="218"/>
    </location>
</feature>
<feature type="helix" evidence="6">
    <location>
        <begin position="229"/>
        <end position="231"/>
    </location>
</feature>
<feature type="helix" evidence="6">
    <location>
        <begin position="247"/>
        <end position="255"/>
    </location>
</feature>
<feature type="turn" evidence="6">
    <location>
        <begin position="258"/>
        <end position="260"/>
    </location>
</feature>
<feature type="strand" evidence="6">
    <location>
        <begin position="261"/>
        <end position="274"/>
    </location>
</feature>
<feature type="helix" evidence="6">
    <location>
        <begin position="277"/>
        <end position="296"/>
    </location>
</feature>
<feature type="strand" evidence="6">
    <location>
        <begin position="303"/>
        <end position="310"/>
    </location>
</feature>
<feature type="helix" evidence="6">
    <location>
        <begin position="324"/>
        <end position="329"/>
    </location>
</feature>
<feature type="helix" evidence="6">
    <location>
        <begin position="332"/>
        <end position="338"/>
    </location>
</feature>
<feature type="strand" evidence="6">
    <location>
        <begin position="341"/>
        <end position="345"/>
    </location>
</feature>
<feature type="helix" evidence="6">
    <location>
        <begin position="347"/>
        <end position="351"/>
    </location>
</feature>
<feature type="helix" evidence="6">
    <location>
        <begin position="352"/>
        <end position="354"/>
    </location>
</feature>
<feature type="strand" evidence="6">
    <location>
        <begin position="355"/>
        <end position="367"/>
    </location>
</feature>
<feature type="strand" evidence="6">
    <location>
        <begin position="370"/>
        <end position="376"/>
    </location>
</feature>
<feature type="turn" evidence="6">
    <location>
        <begin position="379"/>
        <end position="381"/>
    </location>
</feature>
<feature type="helix" evidence="6">
    <location>
        <begin position="384"/>
        <end position="388"/>
    </location>
</feature>
<feature type="strand" evidence="6">
    <location>
        <begin position="394"/>
        <end position="398"/>
    </location>
</feature>
<feature type="strand" evidence="6">
    <location>
        <begin position="406"/>
        <end position="412"/>
    </location>
</feature>
<feature type="strand" evidence="6">
    <location>
        <begin position="414"/>
        <end position="417"/>
    </location>
</feature>
<feature type="strand" evidence="6">
    <location>
        <begin position="421"/>
        <end position="429"/>
    </location>
</feature>
<feature type="strand" evidence="6">
    <location>
        <begin position="436"/>
        <end position="440"/>
    </location>
</feature>
<feature type="strand" evidence="6">
    <location>
        <begin position="443"/>
        <end position="446"/>
    </location>
</feature>
<feature type="helix" evidence="6">
    <location>
        <begin position="447"/>
        <end position="449"/>
    </location>
</feature>
<feature type="helix" evidence="6">
    <location>
        <begin position="453"/>
        <end position="455"/>
    </location>
</feature>
<feature type="strand" evidence="6">
    <location>
        <begin position="461"/>
        <end position="464"/>
    </location>
</feature>
<feature type="strand" evidence="6">
    <location>
        <begin position="470"/>
        <end position="474"/>
    </location>
</feature>
<feature type="helix" evidence="6">
    <location>
        <begin position="479"/>
        <end position="483"/>
    </location>
</feature>
<feature type="helix" evidence="6">
    <location>
        <begin position="484"/>
        <end position="486"/>
    </location>
</feature>
<reference key="1">
    <citation type="journal article" date="2000" name="Nature">
        <title>Sequence and analysis of chromosome 5 of the plant Arabidopsis thaliana.</title>
        <authorList>
            <person name="Tabata S."/>
            <person name="Kaneko T."/>
            <person name="Nakamura Y."/>
            <person name="Kotani H."/>
            <person name="Kato T."/>
            <person name="Asamizu E."/>
            <person name="Miyajima N."/>
            <person name="Sasamoto S."/>
            <person name="Kimura T."/>
            <person name="Hosouchi T."/>
            <person name="Kawashima K."/>
            <person name="Kohara M."/>
            <person name="Matsumoto M."/>
            <person name="Matsuno A."/>
            <person name="Muraki A."/>
            <person name="Nakayama S."/>
            <person name="Nakazaki N."/>
            <person name="Naruo K."/>
            <person name="Okumura S."/>
            <person name="Shinpo S."/>
            <person name="Takeuchi C."/>
            <person name="Wada T."/>
            <person name="Watanabe A."/>
            <person name="Yamada M."/>
            <person name="Yasuda M."/>
            <person name="Sato S."/>
            <person name="de la Bastide M."/>
            <person name="Huang E."/>
            <person name="Spiegel L."/>
            <person name="Gnoj L."/>
            <person name="O'Shaughnessy A."/>
            <person name="Preston R."/>
            <person name="Habermann K."/>
            <person name="Murray J."/>
            <person name="Johnson D."/>
            <person name="Rohlfing T."/>
            <person name="Nelson J."/>
            <person name="Stoneking T."/>
            <person name="Pepin K."/>
            <person name="Spieth J."/>
            <person name="Sekhon M."/>
            <person name="Armstrong J."/>
            <person name="Becker M."/>
            <person name="Belter E."/>
            <person name="Cordum H."/>
            <person name="Cordes M."/>
            <person name="Courtney L."/>
            <person name="Courtney W."/>
            <person name="Dante M."/>
            <person name="Du H."/>
            <person name="Edwards J."/>
            <person name="Fryman J."/>
            <person name="Haakensen B."/>
            <person name="Lamar E."/>
            <person name="Latreille P."/>
            <person name="Leonard S."/>
            <person name="Meyer R."/>
            <person name="Mulvaney E."/>
            <person name="Ozersky P."/>
            <person name="Riley A."/>
            <person name="Strowmatt C."/>
            <person name="Wagner-McPherson C."/>
            <person name="Wollam A."/>
            <person name="Yoakum M."/>
            <person name="Bell M."/>
            <person name="Dedhia N."/>
            <person name="Parnell L."/>
            <person name="Shah R."/>
            <person name="Rodriguez M."/>
            <person name="Hoon See L."/>
            <person name="Vil D."/>
            <person name="Baker J."/>
            <person name="Kirchoff K."/>
            <person name="Toth K."/>
            <person name="King L."/>
            <person name="Bahret A."/>
            <person name="Miller B."/>
            <person name="Marra M.A."/>
            <person name="Martienssen R."/>
            <person name="McCombie W.R."/>
            <person name="Wilson R.K."/>
            <person name="Murphy G."/>
            <person name="Bancroft I."/>
            <person name="Volckaert G."/>
            <person name="Wambutt R."/>
            <person name="Duesterhoeft A."/>
            <person name="Stiekema W."/>
            <person name="Pohl T."/>
            <person name="Entian K.-D."/>
            <person name="Terryn N."/>
            <person name="Hartley N."/>
            <person name="Bent E."/>
            <person name="Johnson S."/>
            <person name="Langham S.-A."/>
            <person name="McCullagh B."/>
            <person name="Robben J."/>
            <person name="Grymonprez B."/>
            <person name="Zimmermann W."/>
            <person name="Ramsperger U."/>
            <person name="Wedler H."/>
            <person name="Balke K."/>
            <person name="Wedler E."/>
            <person name="Peters S."/>
            <person name="van Staveren M."/>
            <person name="Dirkse W."/>
            <person name="Mooijman P."/>
            <person name="Klein Lankhorst R."/>
            <person name="Weitzenegger T."/>
            <person name="Bothe G."/>
            <person name="Rose M."/>
            <person name="Hauf J."/>
            <person name="Berneiser S."/>
            <person name="Hempel S."/>
            <person name="Feldpausch M."/>
            <person name="Lamberth S."/>
            <person name="Villarroel R."/>
            <person name="Gielen J."/>
            <person name="Ardiles W."/>
            <person name="Bents O."/>
            <person name="Lemcke K."/>
            <person name="Kolesov G."/>
            <person name="Mayer K.F.X."/>
            <person name="Rudd S."/>
            <person name="Schoof H."/>
            <person name="Schueller C."/>
            <person name="Zaccaria P."/>
            <person name="Mewes H.-W."/>
            <person name="Bevan M."/>
            <person name="Fransz P.F."/>
        </authorList>
    </citation>
    <scope>NUCLEOTIDE SEQUENCE [LARGE SCALE GENOMIC DNA]</scope>
    <source>
        <strain>cv. Columbia</strain>
    </source>
</reference>
<reference key="2">
    <citation type="journal article" date="2017" name="Plant J.">
        <title>Araport11: a complete reannotation of the Arabidopsis thaliana reference genome.</title>
        <authorList>
            <person name="Cheng C.Y."/>
            <person name="Krishnakumar V."/>
            <person name="Chan A.P."/>
            <person name="Thibaud-Nissen F."/>
            <person name="Schobel S."/>
            <person name="Town C.D."/>
        </authorList>
    </citation>
    <scope>GENOME REANNOTATION</scope>
    <source>
        <strain>cv. Columbia</strain>
    </source>
</reference>
<reference key="3">
    <citation type="journal article" date="2003" name="Science">
        <title>Empirical analysis of transcriptional activity in the Arabidopsis genome.</title>
        <authorList>
            <person name="Yamada K."/>
            <person name="Lim J."/>
            <person name="Dale J.M."/>
            <person name="Chen H."/>
            <person name="Shinn P."/>
            <person name="Palm C.J."/>
            <person name="Southwick A.M."/>
            <person name="Wu H.C."/>
            <person name="Kim C.J."/>
            <person name="Nguyen M."/>
            <person name="Pham P.K."/>
            <person name="Cheuk R.F."/>
            <person name="Karlin-Newmann G."/>
            <person name="Liu S.X."/>
            <person name="Lam B."/>
            <person name="Sakano H."/>
            <person name="Wu T."/>
            <person name="Yu G."/>
            <person name="Miranda M."/>
            <person name="Quach H.L."/>
            <person name="Tripp M."/>
            <person name="Chang C.H."/>
            <person name="Lee J.M."/>
            <person name="Toriumi M.J."/>
            <person name="Chan M.M."/>
            <person name="Tang C.C."/>
            <person name="Onodera C.S."/>
            <person name="Deng J.M."/>
            <person name="Akiyama K."/>
            <person name="Ansari Y."/>
            <person name="Arakawa T."/>
            <person name="Banh J."/>
            <person name="Banno F."/>
            <person name="Bowser L."/>
            <person name="Brooks S.Y."/>
            <person name="Carninci P."/>
            <person name="Chao Q."/>
            <person name="Choy N."/>
            <person name="Enju A."/>
            <person name="Goldsmith A.D."/>
            <person name="Gurjal M."/>
            <person name="Hansen N.F."/>
            <person name="Hayashizaki Y."/>
            <person name="Johnson-Hopson C."/>
            <person name="Hsuan V.W."/>
            <person name="Iida K."/>
            <person name="Karnes M."/>
            <person name="Khan S."/>
            <person name="Koesema E."/>
            <person name="Ishida J."/>
            <person name="Jiang P.X."/>
            <person name="Jones T."/>
            <person name="Kawai J."/>
            <person name="Kamiya A."/>
            <person name="Meyers C."/>
            <person name="Nakajima M."/>
            <person name="Narusaka M."/>
            <person name="Seki M."/>
            <person name="Sakurai T."/>
            <person name="Satou M."/>
            <person name="Tamse R."/>
            <person name="Vaysberg M."/>
            <person name="Wallender E.K."/>
            <person name="Wong C."/>
            <person name="Yamamura Y."/>
            <person name="Yuan S."/>
            <person name="Shinozaki K."/>
            <person name="Davis R.W."/>
            <person name="Theologis A."/>
            <person name="Ecker J.R."/>
        </authorList>
    </citation>
    <scope>NUCLEOTIDE SEQUENCE [LARGE SCALE MRNA]</scope>
    <source>
        <strain>cv. Columbia</strain>
    </source>
</reference>
<reference key="4">
    <citation type="journal article" date="2001" name="Mol. Plant Microbe Interact.">
        <title>Arabidopsis thaliana genes expressed in the early compatible interaction with root-knot nematodes.</title>
        <authorList>
            <person name="Vercauteren I."/>
            <person name="van der Schueren E."/>
            <person name="Van Montagu M."/>
            <person name="Gheysen G."/>
        </authorList>
    </citation>
    <scope>NUCLEOTIDE SEQUENCE [MRNA] OF 345-489</scope>
    <source>
        <strain>cv. Columbia</strain>
        <tissue>Root</tissue>
    </source>
</reference>
<reference key="5">
    <citation type="journal article" date="2005" name="Biochim. Biophys. Acta">
        <title>Biosynthesis of lysine in plants: evidence for a variant of the known bacterial pathways.</title>
        <authorList>
            <person name="Hudson A.O."/>
            <person name="Bless C."/>
            <person name="Macedo P."/>
            <person name="Chatterjee S.P."/>
            <person name="Singh B.K."/>
            <person name="Gilvarg C."/>
            <person name="Leustek T."/>
        </authorList>
    </citation>
    <scope>FUNCTION</scope>
</reference>
<reference key="6">
    <citation type="journal article" date="2012" name="Mol. Cell. Proteomics">
        <title>Comparative large-scale characterisation of plant vs. mammal proteins reveals similar and idiosyncratic N-alpha acetylation features.</title>
        <authorList>
            <person name="Bienvenut W.V."/>
            <person name="Sumpton D."/>
            <person name="Martinez A."/>
            <person name="Lilla S."/>
            <person name="Espagne C."/>
            <person name="Meinnel T."/>
            <person name="Giglione C."/>
        </authorList>
    </citation>
    <scope>ACETYLATION [LARGE SCALE ANALYSIS] AT ALA-51</scope>
    <scope>CLEAVAGE OF TRANSIT PEPTIDE [LARGE SCALE ANALYSIS] AFTER ALA-50</scope>
    <scope>IDENTIFICATION BY MASS SPECTROMETRY [LARGE SCALE ANALYSIS]</scope>
</reference>
<sequence length="489" mass="54164">MAAVTQFLSQPSSIRGTLNQYQLNQTSLSRIPFLSLKSTLKPLKRLSVKAAVSQNSTKTLTKESASSFDHCFKKSSDGFLYCEGTKVQDIMETVEKRPFYLYSKPQITRNLEAYKEALEGVRSVIGYAIKANNNLKILEHLRSLGCGAVLVSGNELRLALLAGFDPTKCIFNGNGKSLEDLVLAAQEGVFVNVDSEFDLNNIVEASRISGKQVNVLLRINPDVDPQVHPYVATGNKNSKFGIRNEKLQWFLDEVKAHPKELKLVGAHCHLGSTITKVDIFRDAAVLMIEYIDEIRRQGFEVSYLNIGGGLGIDYYHAGAVLPTPMDLINTVRELVLSRDLNLIIEPGRSLIANTCCFVNHVTGVKTNGTKNFIVIDGSMAELIRPSLYDAYQHIELVSPTPPEAEVTKFDVVGPVCESADFLGKDRELPTPPQGAGLVVHDAGAYCMSMASTYNLKMRPPEYWVEEDGSITKIRHAETFDDHLRFFEGL</sequence>
<gene>
    <name type="primary">LYSA2</name>
    <name type="synonym">diDi 18A-1f</name>
    <name type="ordered locus">At5g11880</name>
    <name type="ORF">F14F18.50</name>
</gene>
<proteinExistence type="evidence at protein level"/>
<evidence type="ECO:0000250" key="1"/>
<evidence type="ECO:0000255" key="2"/>
<evidence type="ECO:0000269" key="3">
    <source>
    </source>
</evidence>
<evidence type="ECO:0000305" key="4"/>
<evidence type="ECO:0007744" key="5">
    <source>
    </source>
</evidence>
<evidence type="ECO:0007829" key="6">
    <source>
        <dbReference type="PDB" id="6N2F"/>
    </source>
</evidence>
<organism>
    <name type="scientific">Arabidopsis thaliana</name>
    <name type="common">Mouse-ear cress</name>
    <dbReference type="NCBI Taxonomy" id="3702"/>
    <lineage>
        <taxon>Eukaryota</taxon>
        <taxon>Viridiplantae</taxon>
        <taxon>Streptophyta</taxon>
        <taxon>Embryophyta</taxon>
        <taxon>Tracheophyta</taxon>
        <taxon>Spermatophyta</taxon>
        <taxon>Magnoliopsida</taxon>
        <taxon>eudicotyledons</taxon>
        <taxon>Gunneridae</taxon>
        <taxon>Pentapetalae</taxon>
        <taxon>rosids</taxon>
        <taxon>malvids</taxon>
        <taxon>Brassicales</taxon>
        <taxon>Brassicaceae</taxon>
        <taxon>Camelineae</taxon>
        <taxon>Arabidopsis</taxon>
    </lineage>
</organism>
<keyword id="KW-0002">3D-structure</keyword>
<keyword id="KW-0007">Acetylation</keyword>
<keyword id="KW-0028">Amino-acid biosynthesis</keyword>
<keyword id="KW-0150">Chloroplast</keyword>
<keyword id="KW-0210">Decarboxylase</keyword>
<keyword id="KW-0456">Lyase</keyword>
<keyword id="KW-0457">Lysine biosynthesis</keyword>
<keyword id="KW-0934">Plastid</keyword>
<keyword id="KW-0663">Pyridoxal phosphate</keyword>
<keyword id="KW-1185">Reference proteome</keyword>
<keyword id="KW-0809">Transit peptide</keyword>
<name>DCDA2_ARATH</name>